<proteinExistence type="evidence at transcript level"/>
<accession>B0V3H4</accession>
<accession>Q08BN4</accession>
<sequence length="307" mass="33925">MSLENDAAAPPPPPLPPPPPPQPPSLARSESSKKKLYQALAEGRTAVEGDYEEASIIIGQRESSFSKDLQWLLFNNYVPSLIQDGPQCGLVALWMAAHLLQPPKTLLLETLVQTAKDNGYTEQGEMFSASDMAKLAEDVCGCRVQRLSGGMLGENTAVILKHLINRQPILIPYDEDFNHEPCLRNGHKAHWAVASGILLGLREGCVNYKHFPPDITLPWLRLAQSEASVSWPIDDIEEVFVLAKQGKSLRYQLWEFESVAQSNKQLKEMDPQRASDGTRYVLPPGGVQDGLAGQVLLLHTNTEQTKN</sequence>
<gene>
    <name evidence="2" type="primary">actmap</name>
    <name type="ORF">si:dkey-233h2.2</name>
    <name type="ORF">zgc:153119</name>
</gene>
<keyword id="KW-0031">Aminopeptidase</keyword>
<keyword id="KW-0963">Cytoplasm</keyword>
<keyword id="KW-0378">Hydrolase</keyword>
<keyword id="KW-0645">Protease</keyword>
<keyword id="KW-1185">Reference proteome</keyword>
<evidence type="ECO:0000250" key="1">
    <source>
        <dbReference type="UniProtKB" id="J3QPC3"/>
    </source>
</evidence>
<evidence type="ECO:0000250" key="2">
    <source>
        <dbReference type="UniProtKB" id="Q5BKX5"/>
    </source>
</evidence>
<evidence type="ECO:0000256" key="3">
    <source>
        <dbReference type="SAM" id="MobiDB-lite"/>
    </source>
</evidence>
<evidence type="ECO:0000305" key="4"/>
<protein>
    <recommendedName>
        <fullName evidence="2">Actin maturation protease</fullName>
        <ecNumber evidence="2">3.4.11.-</ecNumber>
    </recommendedName>
    <alternativeName>
        <fullName evidence="2">Actin aminopeptidase ACTMAP</fullName>
    </alternativeName>
</protein>
<feature type="chain" id="PRO_0000359784" description="Actin maturation protease">
    <location>
        <begin position="1"/>
        <end position="307"/>
    </location>
</feature>
<feature type="region of interest" description="Disordered" evidence="3">
    <location>
        <begin position="1"/>
        <end position="34"/>
    </location>
</feature>
<feature type="region of interest" description="Peptidase C39-like" evidence="2">
    <location>
        <begin position="80"/>
        <end position="200"/>
    </location>
</feature>
<feature type="compositionally biased region" description="Pro residues" evidence="3">
    <location>
        <begin position="9"/>
        <end position="24"/>
    </location>
</feature>
<feature type="active site" evidence="2">
    <location>
        <position position="88"/>
    </location>
</feature>
<feature type="sequence conflict" description="In Ref. 2; AAI24643." evidence="4" ref="2">
    <original>G</original>
    <variation>R</variation>
    <location>
        <position position="59"/>
    </location>
</feature>
<feature type="sequence conflict" description="In Ref. 2; AAI24643." evidence="4" ref="2">
    <original>Q</original>
    <variation>K</variation>
    <location>
        <position position="113"/>
    </location>
</feature>
<dbReference type="EC" id="3.4.11.-" evidence="2"/>
<dbReference type="EMBL" id="CU138549">
    <property type="protein sequence ID" value="CAQ14678.1"/>
    <property type="molecule type" value="Genomic_DNA"/>
</dbReference>
<dbReference type="EMBL" id="BC124642">
    <property type="protein sequence ID" value="AAI24643.1"/>
    <property type="molecule type" value="mRNA"/>
</dbReference>
<dbReference type="RefSeq" id="NP_001070743.2">
    <property type="nucleotide sequence ID" value="NM_001077275.2"/>
</dbReference>
<dbReference type="RefSeq" id="XP_005168273.1">
    <property type="nucleotide sequence ID" value="XM_005168216.5"/>
</dbReference>
<dbReference type="FunCoup" id="B0V3H4">
    <property type="interactions" value="1197"/>
</dbReference>
<dbReference type="STRING" id="7955.ENSDARP00000057732"/>
<dbReference type="PaxDb" id="7955-ENSDARP00000057732"/>
<dbReference type="Ensembl" id="ENSDART00000057733">
    <property type="protein sequence ID" value="ENSDARP00000057732"/>
    <property type="gene ID" value="ENSDARG00000039513"/>
</dbReference>
<dbReference type="GeneID" id="768129"/>
<dbReference type="KEGG" id="dre:768129"/>
<dbReference type="AGR" id="ZFIN:ZDB-GENE-061013-199"/>
<dbReference type="CTD" id="284325"/>
<dbReference type="ZFIN" id="ZDB-GENE-061013-199">
    <property type="gene designation" value="actmap"/>
</dbReference>
<dbReference type="eggNOG" id="ENOG502QQQD">
    <property type="taxonomic scope" value="Eukaryota"/>
</dbReference>
<dbReference type="HOGENOM" id="CLU_077492_1_0_1"/>
<dbReference type="InParanoid" id="B0V3H4"/>
<dbReference type="OMA" id="QLWDYEQ"/>
<dbReference type="OrthoDB" id="198816at2759"/>
<dbReference type="PhylomeDB" id="B0V3H4"/>
<dbReference type="TreeFam" id="TF314051"/>
<dbReference type="PRO" id="PR:B0V3H4"/>
<dbReference type="Proteomes" id="UP000000437">
    <property type="component" value="Chromosome 18"/>
</dbReference>
<dbReference type="Bgee" id="ENSDARG00000039513">
    <property type="expression patterns" value="Expressed in early embryo and 17 other cell types or tissues"/>
</dbReference>
<dbReference type="GO" id="GO:0005737">
    <property type="term" value="C:cytoplasm"/>
    <property type="evidence" value="ECO:0007669"/>
    <property type="project" value="UniProtKB-SubCell"/>
</dbReference>
<dbReference type="GO" id="GO:0004239">
    <property type="term" value="F:initiator methionyl aminopeptidase activity"/>
    <property type="evidence" value="ECO:0000250"/>
    <property type="project" value="UniProtKB"/>
</dbReference>
<dbReference type="GO" id="GO:0016485">
    <property type="term" value="P:protein processing"/>
    <property type="evidence" value="ECO:0000250"/>
    <property type="project" value="UniProtKB"/>
</dbReference>
<dbReference type="InterPro" id="IPR040043">
    <property type="entry name" value="ACTMAP"/>
</dbReference>
<dbReference type="PANTHER" id="PTHR28631:SF1">
    <property type="entry name" value="ACTIN MATURATION PROTEASE"/>
    <property type="match status" value="1"/>
</dbReference>
<dbReference type="PANTHER" id="PTHR28631">
    <property type="entry name" value="UPF0692 PROTEIN C19ORF54"/>
    <property type="match status" value="1"/>
</dbReference>
<dbReference type="Pfam" id="PF21646">
    <property type="entry name" value="ACTMAP-like_C"/>
    <property type="match status" value="1"/>
</dbReference>
<dbReference type="SUPFAM" id="SSF101447">
    <property type="entry name" value="Formin homology 2 domain (FH2 domain)"/>
    <property type="match status" value="1"/>
</dbReference>
<name>ACTMP_DANRE</name>
<comment type="function">
    <text evidence="1 2">Actin maturation protease that specifically mediates the cleavage of immature acetylated N-terminal actin, thereby contributing to actin maturation (By similarity). Cleaves N-terminal acetylated methionine of immature cytoplasmic actin after translation (By similarity). Cleaves N-terminal acetylated cysteine of muscle actin after canonical removal of N-terminal methionine (By similarity).</text>
</comment>
<comment type="catalytic activity">
    <molecule>Actin maturation protease</molecule>
    <reaction evidence="2">
        <text>N-terminal N(alpha)-acetyl-L-methionyl-L-aspartyl-[protein] + H2O = N-terminal L-aspartyl-[protein] + N-acetyl-L-methionine</text>
        <dbReference type="Rhea" id="RHEA:74571"/>
        <dbReference type="Rhea" id="RHEA-COMP:12669"/>
        <dbReference type="Rhea" id="RHEA-COMP:12693"/>
        <dbReference type="ChEBI" id="CHEBI:15377"/>
        <dbReference type="ChEBI" id="CHEBI:64720"/>
        <dbReference type="ChEBI" id="CHEBI:71670"/>
        <dbReference type="ChEBI" id="CHEBI:133063"/>
    </reaction>
    <physiologicalReaction direction="left-to-right" evidence="2">
        <dbReference type="Rhea" id="RHEA:74572"/>
    </physiologicalReaction>
</comment>
<comment type="catalytic activity">
    <molecule>Actin maturation protease</molecule>
    <reaction evidence="2">
        <text>N-terminal N(alpha)-acetyl-L-methionyl-L-glutamyl-[protein] + H2O = N-terminal L-glutamyl-[protein] + N-acetyl-L-methionine</text>
        <dbReference type="Rhea" id="RHEA:74575"/>
        <dbReference type="Rhea" id="RHEA-COMP:12668"/>
        <dbReference type="Rhea" id="RHEA-COMP:12697"/>
        <dbReference type="ChEBI" id="CHEBI:15377"/>
        <dbReference type="ChEBI" id="CHEBI:64721"/>
        <dbReference type="ChEBI" id="CHEBI:71670"/>
        <dbReference type="ChEBI" id="CHEBI:133360"/>
    </reaction>
    <physiologicalReaction direction="left-to-right" evidence="2">
        <dbReference type="Rhea" id="RHEA:74576"/>
    </physiologicalReaction>
</comment>
<comment type="catalytic activity">
    <molecule>Actin maturation protease</molecule>
    <reaction evidence="1">
        <text>N-terminal N(alpha)-acetyl-L-cysteinyl-L-aspartyl-[protein] + H2O = N-terminal L-aspartyl-[protein] + N-acetyl-L-cysteine</text>
        <dbReference type="Rhea" id="RHEA:74579"/>
        <dbReference type="Rhea" id="RHEA-COMP:12669"/>
        <dbReference type="Rhea" id="RHEA-COMP:18395"/>
        <dbReference type="ChEBI" id="CHEBI:15377"/>
        <dbReference type="ChEBI" id="CHEBI:64720"/>
        <dbReference type="ChEBI" id="CHEBI:78236"/>
        <dbReference type="ChEBI" id="CHEBI:193599"/>
    </reaction>
    <physiologicalReaction direction="left-to-right" evidence="1">
        <dbReference type="Rhea" id="RHEA:74580"/>
    </physiologicalReaction>
</comment>
<comment type="catalytic activity">
    <molecule>Actin maturation protease</molecule>
    <reaction evidence="1">
        <text>N-terminal N(alpha)-acetyl-L-cysteinyl-L-glutamyl-[protein] + H2O = N-terminal L-glutamyl-[protein] + N-acetyl-L-cysteine</text>
        <dbReference type="Rhea" id="RHEA:74583"/>
        <dbReference type="Rhea" id="RHEA-COMP:12668"/>
        <dbReference type="Rhea" id="RHEA-COMP:18396"/>
        <dbReference type="ChEBI" id="CHEBI:15377"/>
        <dbReference type="ChEBI" id="CHEBI:64721"/>
        <dbReference type="ChEBI" id="CHEBI:78236"/>
        <dbReference type="ChEBI" id="CHEBI:193601"/>
    </reaction>
    <physiologicalReaction direction="left-to-right" evidence="1">
        <dbReference type="Rhea" id="RHEA:74584"/>
    </physiologicalReaction>
</comment>
<comment type="subcellular location">
    <subcellularLocation>
        <location evidence="2">Cytoplasm</location>
    </subcellularLocation>
</comment>
<comment type="similarity">
    <text evidence="4">Belongs to the ACTMAP family.</text>
</comment>
<reference key="1">
    <citation type="journal article" date="2013" name="Nature">
        <title>The zebrafish reference genome sequence and its relationship to the human genome.</title>
        <authorList>
            <person name="Howe K."/>
            <person name="Clark M.D."/>
            <person name="Torroja C.F."/>
            <person name="Torrance J."/>
            <person name="Berthelot C."/>
            <person name="Muffato M."/>
            <person name="Collins J.E."/>
            <person name="Humphray S."/>
            <person name="McLaren K."/>
            <person name="Matthews L."/>
            <person name="McLaren S."/>
            <person name="Sealy I."/>
            <person name="Caccamo M."/>
            <person name="Churcher C."/>
            <person name="Scott C."/>
            <person name="Barrett J.C."/>
            <person name="Koch R."/>
            <person name="Rauch G.J."/>
            <person name="White S."/>
            <person name="Chow W."/>
            <person name="Kilian B."/>
            <person name="Quintais L.T."/>
            <person name="Guerra-Assuncao J.A."/>
            <person name="Zhou Y."/>
            <person name="Gu Y."/>
            <person name="Yen J."/>
            <person name="Vogel J.H."/>
            <person name="Eyre T."/>
            <person name="Redmond S."/>
            <person name="Banerjee R."/>
            <person name="Chi J."/>
            <person name="Fu B."/>
            <person name="Langley E."/>
            <person name="Maguire S.F."/>
            <person name="Laird G.K."/>
            <person name="Lloyd D."/>
            <person name="Kenyon E."/>
            <person name="Donaldson S."/>
            <person name="Sehra H."/>
            <person name="Almeida-King J."/>
            <person name="Loveland J."/>
            <person name="Trevanion S."/>
            <person name="Jones M."/>
            <person name="Quail M."/>
            <person name="Willey D."/>
            <person name="Hunt A."/>
            <person name="Burton J."/>
            <person name="Sims S."/>
            <person name="McLay K."/>
            <person name="Plumb B."/>
            <person name="Davis J."/>
            <person name="Clee C."/>
            <person name="Oliver K."/>
            <person name="Clark R."/>
            <person name="Riddle C."/>
            <person name="Elliot D."/>
            <person name="Threadgold G."/>
            <person name="Harden G."/>
            <person name="Ware D."/>
            <person name="Begum S."/>
            <person name="Mortimore B."/>
            <person name="Kerry G."/>
            <person name="Heath P."/>
            <person name="Phillimore B."/>
            <person name="Tracey A."/>
            <person name="Corby N."/>
            <person name="Dunn M."/>
            <person name="Johnson C."/>
            <person name="Wood J."/>
            <person name="Clark S."/>
            <person name="Pelan S."/>
            <person name="Griffiths G."/>
            <person name="Smith M."/>
            <person name="Glithero R."/>
            <person name="Howden P."/>
            <person name="Barker N."/>
            <person name="Lloyd C."/>
            <person name="Stevens C."/>
            <person name="Harley J."/>
            <person name="Holt K."/>
            <person name="Panagiotidis G."/>
            <person name="Lovell J."/>
            <person name="Beasley H."/>
            <person name="Henderson C."/>
            <person name="Gordon D."/>
            <person name="Auger K."/>
            <person name="Wright D."/>
            <person name="Collins J."/>
            <person name="Raisen C."/>
            <person name="Dyer L."/>
            <person name="Leung K."/>
            <person name="Robertson L."/>
            <person name="Ambridge K."/>
            <person name="Leongamornlert D."/>
            <person name="McGuire S."/>
            <person name="Gilderthorp R."/>
            <person name="Griffiths C."/>
            <person name="Manthravadi D."/>
            <person name="Nichol S."/>
            <person name="Barker G."/>
            <person name="Whitehead S."/>
            <person name="Kay M."/>
            <person name="Brown J."/>
            <person name="Murnane C."/>
            <person name="Gray E."/>
            <person name="Humphries M."/>
            <person name="Sycamore N."/>
            <person name="Barker D."/>
            <person name="Saunders D."/>
            <person name="Wallis J."/>
            <person name="Babbage A."/>
            <person name="Hammond S."/>
            <person name="Mashreghi-Mohammadi M."/>
            <person name="Barr L."/>
            <person name="Martin S."/>
            <person name="Wray P."/>
            <person name="Ellington A."/>
            <person name="Matthews N."/>
            <person name="Ellwood M."/>
            <person name="Woodmansey R."/>
            <person name="Clark G."/>
            <person name="Cooper J."/>
            <person name="Tromans A."/>
            <person name="Grafham D."/>
            <person name="Skuce C."/>
            <person name="Pandian R."/>
            <person name="Andrews R."/>
            <person name="Harrison E."/>
            <person name="Kimberley A."/>
            <person name="Garnett J."/>
            <person name="Fosker N."/>
            <person name="Hall R."/>
            <person name="Garner P."/>
            <person name="Kelly D."/>
            <person name="Bird C."/>
            <person name="Palmer S."/>
            <person name="Gehring I."/>
            <person name="Berger A."/>
            <person name="Dooley C.M."/>
            <person name="Ersan-Urun Z."/>
            <person name="Eser C."/>
            <person name="Geiger H."/>
            <person name="Geisler M."/>
            <person name="Karotki L."/>
            <person name="Kirn A."/>
            <person name="Konantz J."/>
            <person name="Konantz M."/>
            <person name="Oberlander M."/>
            <person name="Rudolph-Geiger S."/>
            <person name="Teucke M."/>
            <person name="Lanz C."/>
            <person name="Raddatz G."/>
            <person name="Osoegawa K."/>
            <person name="Zhu B."/>
            <person name="Rapp A."/>
            <person name="Widaa S."/>
            <person name="Langford C."/>
            <person name="Yang F."/>
            <person name="Schuster S.C."/>
            <person name="Carter N.P."/>
            <person name="Harrow J."/>
            <person name="Ning Z."/>
            <person name="Herrero J."/>
            <person name="Searle S.M."/>
            <person name="Enright A."/>
            <person name="Geisler R."/>
            <person name="Plasterk R.H."/>
            <person name="Lee C."/>
            <person name="Westerfield M."/>
            <person name="de Jong P.J."/>
            <person name="Zon L.I."/>
            <person name="Postlethwait J.H."/>
            <person name="Nusslein-Volhard C."/>
            <person name="Hubbard T.J."/>
            <person name="Roest Crollius H."/>
            <person name="Rogers J."/>
            <person name="Stemple D.L."/>
        </authorList>
    </citation>
    <scope>NUCLEOTIDE SEQUENCE [LARGE SCALE GENOMIC DNA]</scope>
    <source>
        <strain>Tuebingen</strain>
    </source>
</reference>
<reference key="2">
    <citation type="submission" date="2006-10" db="EMBL/GenBank/DDBJ databases">
        <authorList>
            <consortium name="NIH - Zebrafish Gene Collection (ZGC) project"/>
        </authorList>
    </citation>
    <scope>NUCLEOTIDE SEQUENCE [LARGE SCALE MRNA]</scope>
    <source>
        <tissue>Brain</tissue>
    </source>
</reference>
<organism>
    <name type="scientific">Danio rerio</name>
    <name type="common">Zebrafish</name>
    <name type="synonym">Brachydanio rerio</name>
    <dbReference type="NCBI Taxonomy" id="7955"/>
    <lineage>
        <taxon>Eukaryota</taxon>
        <taxon>Metazoa</taxon>
        <taxon>Chordata</taxon>
        <taxon>Craniata</taxon>
        <taxon>Vertebrata</taxon>
        <taxon>Euteleostomi</taxon>
        <taxon>Actinopterygii</taxon>
        <taxon>Neopterygii</taxon>
        <taxon>Teleostei</taxon>
        <taxon>Ostariophysi</taxon>
        <taxon>Cypriniformes</taxon>
        <taxon>Danionidae</taxon>
        <taxon>Danioninae</taxon>
        <taxon>Danio</taxon>
    </lineage>
</organism>